<organism>
    <name type="scientific">Fervidobacterium nodosum (strain ATCC 35602 / DSM 5306 / Rt17-B1)</name>
    <dbReference type="NCBI Taxonomy" id="381764"/>
    <lineage>
        <taxon>Bacteria</taxon>
        <taxon>Thermotogati</taxon>
        <taxon>Thermotogota</taxon>
        <taxon>Thermotogae</taxon>
        <taxon>Thermotogales</taxon>
        <taxon>Fervidobacteriaceae</taxon>
        <taxon>Fervidobacterium</taxon>
    </lineage>
</organism>
<feature type="chain" id="PRO_1000072437" description="Small ribosomal subunit protein bS20">
    <location>
        <begin position="1"/>
        <end position="95"/>
    </location>
</feature>
<proteinExistence type="inferred from homology"/>
<accession>A7HJB0</accession>
<evidence type="ECO:0000255" key="1">
    <source>
        <dbReference type="HAMAP-Rule" id="MF_00500"/>
    </source>
</evidence>
<evidence type="ECO:0000305" key="2"/>
<sequence>MPNKMSAEKRVRVSEKRRVLNKAYKTSMKNKIKAVLAAIAQKKSAEEIMELFRKAQSAIDKAAKSGAIHKNQASRRKSRLAVKVKAYLGAEKQGV</sequence>
<comment type="function">
    <text evidence="1">Binds directly to 16S ribosomal RNA.</text>
</comment>
<comment type="similarity">
    <text evidence="1">Belongs to the bacterial ribosomal protein bS20 family.</text>
</comment>
<name>RS20_FERNB</name>
<protein>
    <recommendedName>
        <fullName evidence="1">Small ribosomal subunit protein bS20</fullName>
    </recommendedName>
    <alternativeName>
        <fullName evidence="2">30S ribosomal protein S20</fullName>
    </alternativeName>
</protein>
<reference key="1">
    <citation type="submission" date="2007-07" db="EMBL/GenBank/DDBJ databases">
        <title>Complete sequence of Fervidobacterium nodosum Rt17-B1.</title>
        <authorList>
            <consortium name="US DOE Joint Genome Institute"/>
            <person name="Copeland A."/>
            <person name="Lucas S."/>
            <person name="Lapidus A."/>
            <person name="Barry K."/>
            <person name="Glavina del Rio T."/>
            <person name="Dalin E."/>
            <person name="Tice H."/>
            <person name="Pitluck S."/>
            <person name="Saunders E."/>
            <person name="Brettin T."/>
            <person name="Bruce D."/>
            <person name="Detter J.C."/>
            <person name="Han C."/>
            <person name="Schmutz J."/>
            <person name="Larimer F."/>
            <person name="Land M."/>
            <person name="Hauser L."/>
            <person name="Kyrpides N."/>
            <person name="Mikhailova N."/>
            <person name="Nelson K."/>
            <person name="Gogarten J.P."/>
            <person name="Noll K."/>
            <person name="Richardson P."/>
        </authorList>
    </citation>
    <scope>NUCLEOTIDE SEQUENCE [LARGE SCALE GENOMIC DNA]</scope>
    <source>
        <strain>ATCC 35602 / DSM 5306 / Rt17-B1</strain>
    </source>
</reference>
<dbReference type="EMBL" id="CP000771">
    <property type="protein sequence ID" value="ABS59993.1"/>
    <property type="molecule type" value="Genomic_DNA"/>
</dbReference>
<dbReference type="RefSeq" id="WP_011993316.1">
    <property type="nucleotide sequence ID" value="NC_009718.1"/>
</dbReference>
<dbReference type="SMR" id="A7HJB0"/>
<dbReference type="STRING" id="381764.Fnod_0126"/>
<dbReference type="KEGG" id="fno:Fnod_0126"/>
<dbReference type="eggNOG" id="COG0268">
    <property type="taxonomic scope" value="Bacteria"/>
</dbReference>
<dbReference type="HOGENOM" id="CLU_160655_3_1_0"/>
<dbReference type="OrthoDB" id="9808392at2"/>
<dbReference type="Proteomes" id="UP000002415">
    <property type="component" value="Chromosome"/>
</dbReference>
<dbReference type="GO" id="GO:0005829">
    <property type="term" value="C:cytosol"/>
    <property type="evidence" value="ECO:0007669"/>
    <property type="project" value="TreeGrafter"/>
</dbReference>
<dbReference type="GO" id="GO:0015935">
    <property type="term" value="C:small ribosomal subunit"/>
    <property type="evidence" value="ECO:0007669"/>
    <property type="project" value="TreeGrafter"/>
</dbReference>
<dbReference type="GO" id="GO:0070181">
    <property type="term" value="F:small ribosomal subunit rRNA binding"/>
    <property type="evidence" value="ECO:0007669"/>
    <property type="project" value="TreeGrafter"/>
</dbReference>
<dbReference type="GO" id="GO:0003735">
    <property type="term" value="F:structural constituent of ribosome"/>
    <property type="evidence" value="ECO:0007669"/>
    <property type="project" value="InterPro"/>
</dbReference>
<dbReference type="GO" id="GO:0006412">
    <property type="term" value="P:translation"/>
    <property type="evidence" value="ECO:0007669"/>
    <property type="project" value="UniProtKB-UniRule"/>
</dbReference>
<dbReference type="FunFam" id="1.20.58.110:FF:000001">
    <property type="entry name" value="30S ribosomal protein S20"/>
    <property type="match status" value="1"/>
</dbReference>
<dbReference type="Gene3D" id="1.20.58.110">
    <property type="entry name" value="Ribosomal protein S20"/>
    <property type="match status" value="1"/>
</dbReference>
<dbReference type="HAMAP" id="MF_00500">
    <property type="entry name" value="Ribosomal_bS20"/>
    <property type="match status" value="1"/>
</dbReference>
<dbReference type="InterPro" id="IPR002583">
    <property type="entry name" value="Ribosomal_bS20"/>
</dbReference>
<dbReference type="InterPro" id="IPR036510">
    <property type="entry name" value="Ribosomal_bS20_sf"/>
</dbReference>
<dbReference type="NCBIfam" id="TIGR00029">
    <property type="entry name" value="S20"/>
    <property type="match status" value="1"/>
</dbReference>
<dbReference type="PANTHER" id="PTHR33398">
    <property type="entry name" value="30S RIBOSOMAL PROTEIN S20"/>
    <property type="match status" value="1"/>
</dbReference>
<dbReference type="PANTHER" id="PTHR33398:SF1">
    <property type="entry name" value="SMALL RIBOSOMAL SUBUNIT PROTEIN BS20C"/>
    <property type="match status" value="1"/>
</dbReference>
<dbReference type="Pfam" id="PF01649">
    <property type="entry name" value="Ribosomal_S20p"/>
    <property type="match status" value="1"/>
</dbReference>
<dbReference type="SUPFAM" id="SSF46992">
    <property type="entry name" value="Ribosomal protein S20"/>
    <property type="match status" value="1"/>
</dbReference>
<gene>
    <name evidence="1" type="primary">rpsT</name>
    <name type="ordered locus">Fnod_0126</name>
</gene>
<keyword id="KW-1185">Reference proteome</keyword>
<keyword id="KW-0687">Ribonucleoprotein</keyword>
<keyword id="KW-0689">Ribosomal protein</keyword>
<keyword id="KW-0694">RNA-binding</keyword>
<keyword id="KW-0699">rRNA-binding</keyword>